<accession>P56368</accession>
<proteinExistence type="inferred from homology"/>
<feature type="chain" id="PRO_0000129447" description="Large ribosomal subunit protein uL23c">
    <location>
        <begin position="1"/>
        <end position="86"/>
    </location>
</feature>
<sequence length="86" mass="10052">MMLDLVKYPVIRTEKTTRLVENNQLSFDVDVRITKPQIRKIIEEFFNVKVLAVNTHRPPRKTNRLGSKPSYKRVIVTVDSDVTLLK</sequence>
<comment type="function">
    <text evidence="1">Binds to 23S rRNA.</text>
</comment>
<comment type="subunit">
    <text evidence="1">Part of the 50S ribosomal subunit.</text>
</comment>
<comment type="subcellular location">
    <subcellularLocation>
        <location>Plastid</location>
        <location>Chloroplast</location>
    </subcellularLocation>
</comment>
<comment type="similarity">
    <text evidence="2">Belongs to the universal ribosomal protein uL23 family.</text>
</comment>
<organism>
    <name type="scientific">Chlorella vulgaris</name>
    <name type="common">Green alga</name>
    <dbReference type="NCBI Taxonomy" id="3077"/>
    <lineage>
        <taxon>Eukaryota</taxon>
        <taxon>Viridiplantae</taxon>
        <taxon>Chlorophyta</taxon>
        <taxon>core chlorophytes</taxon>
        <taxon>Trebouxiophyceae</taxon>
        <taxon>Chlorellales</taxon>
        <taxon>Chlorellaceae</taxon>
        <taxon>Chlorella clade</taxon>
        <taxon>Chlorella</taxon>
    </lineage>
</organism>
<dbReference type="EMBL" id="AB001684">
    <property type="protein sequence ID" value="BAA58010.1"/>
    <property type="molecule type" value="Genomic_DNA"/>
</dbReference>
<dbReference type="PIR" id="T07362">
    <property type="entry name" value="T07362"/>
</dbReference>
<dbReference type="RefSeq" id="NP_045934.1">
    <property type="nucleotide sequence ID" value="NC_001865.1"/>
</dbReference>
<dbReference type="SMR" id="P56368"/>
<dbReference type="GeneID" id="809147"/>
<dbReference type="GO" id="GO:0009507">
    <property type="term" value="C:chloroplast"/>
    <property type="evidence" value="ECO:0007669"/>
    <property type="project" value="UniProtKB-SubCell"/>
</dbReference>
<dbReference type="GO" id="GO:1990904">
    <property type="term" value="C:ribonucleoprotein complex"/>
    <property type="evidence" value="ECO:0007669"/>
    <property type="project" value="UniProtKB-KW"/>
</dbReference>
<dbReference type="GO" id="GO:0005840">
    <property type="term" value="C:ribosome"/>
    <property type="evidence" value="ECO:0007669"/>
    <property type="project" value="UniProtKB-KW"/>
</dbReference>
<dbReference type="GO" id="GO:0019843">
    <property type="term" value="F:rRNA binding"/>
    <property type="evidence" value="ECO:0007669"/>
    <property type="project" value="UniProtKB-UniRule"/>
</dbReference>
<dbReference type="GO" id="GO:0003735">
    <property type="term" value="F:structural constituent of ribosome"/>
    <property type="evidence" value="ECO:0007669"/>
    <property type="project" value="InterPro"/>
</dbReference>
<dbReference type="GO" id="GO:0006412">
    <property type="term" value="P:translation"/>
    <property type="evidence" value="ECO:0007669"/>
    <property type="project" value="UniProtKB-UniRule"/>
</dbReference>
<dbReference type="Gene3D" id="3.30.70.330">
    <property type="match status" value="1"/>
</dbReference>
<dbReference type="HAMAP" id="MF_01369_B">
    <property type="entry name" value="Ribosomal_uL23_B"/>
    <property type="match status" value="1"/>
</dbReference>
<dbReference type="InterPro" id="IPR012677">
    <property type="entry name" value="Nucleotide-bd_a/b_plait_sf"/>
</dbReference>
<dbReference type="InterPro" id="IPR013025">
    <property type="entry name" value="Ribosomal_uL23-like"/>
</dbReference>
<dbReference type="InterPro" id="IPR012678">
    <property type="entry name" value="Ribosomal_uL23/eL15/eS24_sf"/>
</dbReference>
<dbReference type="PANTHER" id="PTHR11620">
    <property type="entry name" value="60S RIBOSOMAL PROTEIN L23A"/>
    <property type="match status" value="1"/>
</dbReference>
<dbReference type="Pfam" id="PF00276">
    <property type="entry name" value="Ribosomal_L23"/>
    <property type="match status" value="1"/>
</dbReference>
<dbReference type="SUPFAM" id="SSF54189">
    <property type="entry name" value="Ribosomal proteins S24e, L23 and L15e"/>
    <property type="match status" value="1"/>
</dbReference>
<gene>
    <name type="primary">rpl23</name>
</gene>
<keyword id="KW-0150">Chloroplast</keyword>
<keyword id="KW-0934">Plastid</keyword>
<keyword id="KW-0687">Ribonucleoprotein</keyword>
<keyword id="KW-0689">Ribosomal protein</keyword>
<keyword id="KW-0694">RNA-binding</keyword>
<keyword id="KW-0699">rRNA-binding</keyword>
<geneLocation type="chloroplast"/>
<evidence type="ECO:0000250" key="1"/>
<evidence type="ECO:0000305" key="2"/>
<protein>
    <recommendedName>
        <fullName evidence="2">Large ribosomal subunit protein uL23c</fullName>
    </recommendedName>
    <alternativeName>
        <fullName>50S ribosomal protein L23, chloroplastic</fullName>
    </alternativeName>
</protein>
<reference key="1">
    <citation type="journal article" date="1997" name="Proc. Natl. Acad. Sci. U.S.A.">
        <title>Complete nucleotide sequence of the chloroplast genome from the green alga Chlorella vulgaris: the existence of genes possibly involved in chloroplast division.</title>
        <authorList>
            <person name="Wakasugi T."/>
            <person name="Nagai T."/>
            <person name="Kapoor M."/>
            <person name="Sugita M."/>
            <person name="Ito M."/>
            <person name="Ito S."/>
            <person name="Tsudzuki J."/>
            <person name="Nakashima K."/>
            <person name="Tsudzuki T."/>
            <person name="Suzuki Y."/>
            <person name="Hamada A."/>
            <person name="Ohta T."/>
            <person name="Inamura A."/>
            <person name="Yoshinaga K."/>
            <person name="Sugiura M."/>
        </authorList>
    </citation>
    <scope>NUCLEOTIDE SEQUENCE [LARGE SCALE GENOMIC DNA]</scope>
    <source>
        <strain>IAM C-27 / Tamiya</strain>
    </source>
</reference>
<name>RK23_CHLVU</name>